<comment type="subcellular location">
    <subcellularLocation>
        <location>Plastid</location>
        <location>Chloroplast</location>
    </subcellularLocation>
</comment>
<comment type="similarity">
    <text evidence="1">Belongs to the universal ribosomal protein uS2 family.</text>
</comment>
<name>RR2_GALSU</name>
<protein>
    <recommendedName>
        <fullName evidence="1">Small ribosomal subunit protein uS2c</fullName>
    </recommendedName>
    <alternativeName>
        <fullName>30S ribosomal protein S2, chloroplastic</fullName>
    </alternativeName>
</protein>
<reference key="1">
    <citation type="journal article" date="1993" name="Plant Mol. Biol.">
        <title>Organization of plastid-encoded ATPase genes and flanking regions including homologues of infB and tsf in the thermophilic red alga Galdieria sulphuraria.</title>
        <authorList>
            <person name="Kostrzewa M."/>
            <person name="Zetsche K."/>
        </authorList>
    </citation>
    <scope>NUCLEOTIDE SEQUENCE [GENOMIC DNA]</scope>
    <source>
        <strain>14-1-1 / Isolate 107.79/Goettingen</strain>
    </source>
</reference>
<feature type="chain" id="PRO_0000134296" description="Small ribosomal subunit protein uS2c">
    <location>
        <begin position="1"/>
        <end position="233"/>
    </location>
</feature>
<organism>
    <name type="scientific">Galdieria sulphuraria</name>
    <name type="common">Red alga</name>
    <dbReference type="NCBI Taxonomy" id="130081"/>
    <lineage>
        <taxon>Eukaryota</taxon>
        <taxon>Rhodophyta</taxon>
        <taxon>Bangiophyceae</taxon>
        <taxon>Galdieriales</taxon>
        <taxon>Galdieriaceae</taxon>
        <taxon>Galdieria</taxon>
    </lineage>
</organism>
<keyword id="KW-0150">Chloroplast</keyword>
<keyword id="KW-0934">Plastid</keyword>
<keyword id="KW-0687">Ribonucleoprotein</keyword>
<keyword id="KW-0689">Ribosomal protein</keyword>
<dbReference type="EMBL" id="X67814">
    <property type="protein sequence ID" value="CAA48018.1"/>
    <property type="molecule type" value="Genomic_DNA"/>
</dbReference>
<dbReference type="SMR" id="P35014"/>
<dbReference type="GO" id="GO:0009507">
    <property type="term" value="C:chloroplast"/>
    <property type="evidence" value="ECO:0007669"/>
    <property type="project" value="UniProtKB-SubCell"/>
</dbReference>
<dbReference type="GO" id="GO:0005763">
    <property type="term" value="C:mitochondrial small ribosomal subunit"/>
    <property type="evidence" value="ECO:0007669"/>
    <property type="project" value="TreeGrafter"/>
</dbReference>
<dbReference type="GO" id="GO:0003735">
    <property type="term" value="F:structural constituent of ribosome"/>
    <property type="evidence" value="ECO:0007669"/>
    <property type="project" value="InterPro"/>
</dbReference>
<dbReference type="GO" id="GO:0006412">
    <property type="term" value="P:translation"/>
    <property type="evidence" value="ECO:0007669"/>
    <property type="project" value="UniProtKB-UniRule"/>
</dbReference>
<dbReference type="CDD" id="cd01425">
    <property type="entry name" value="RPS2"/>
    <property type="match status" value="1"/>
</dbReference>
<dbReference type="Gene3D" id="3.40.50.10490">
    <property type="entry name" value="Glucose-6-phosphate isomerase like protein, domain 1"/>
    <property type="match status" value="1"/>
</dbReference>
<dbReference type="Gene3D" id="1.10.287.610">
    <property type="entry name" value="Helix hairpin bin"/>
    <property type="match status" value="1"/>
</dbReference>
<dbReference type="HAMAP" id="MF_00291_B">
    <property type="entry name" value="Ribosomal_uS2_B"/>
    <property type="match status" value="1"/>
</dbReference>
<dbReference type="InterPro" id="IPR001865">
    <property type="entry name" value="Ribosomal_uS2"/>
</dbReference>
<dbReference type="InterPro" id="IPR005706">
    <property type="entry name" value="Ribosomal_uS2_bac/mit/plastid"/>
</dbReference>
<dbReference type="InterPro" id="IPR018130">
    <property type="entry name" value="Ribosomal_uS2_CS"/>
</dbReference>
<dbReference type="InterPro" id="IPR023591">
    <property type="entry name" value="Ribosomal_uS2_flav_dom_sf"/>
</dbReference>
<dbReference type="NCBIfam" id="TIGR01011">
    <property type="entry name" value="rpsB_bact"/>
    <property type="match status" value="1"/>
</dbReference>
<dbReference type="PANTHER" id="PTHR12534">
    <property type="entry name" value="30S RIBOSOMAL PROTEIN S2 PROKARYOTIC AND ORGANELLAR"/>
    <property type="match status" value="1"/>
</dbReference>
<dbReference type="PANTHER" id="PTHR12534:SF0">
    <property type="entry name" value="SMALL RIBOSOMAL SUBUNIT PROTEIN US2M"/>
    <property type="match status" value="1"/>
</dbReference>
<dbReference type="Pfam" id="PF00318">
    <property type="entry name" value="Ribosomal_S2"/>
    <property type="match status" value="1"/>
</dbReference>
<dbReference type="PRINTS" id="PR00395">
    <property type="entry name" value="RIBOSOMALS2"/>
</dbReference>
<dbReference type="SUPFAM" id="SSF52313">
    <property type="entry name" value="Ribosomal protein S2"/>
    <property type="match status" value="1"/>
</dbReference>
<dbReference type="PROSITE" id="PS00962">
    <property type="entry name" value="RIBOSOMAL_S2_1"/>
    <property type="match status" value="1"/>
</dbReference>
<dbReference type="PROSITE" id="PS00963">
    <property type="entry name" value="RIBOSOMAL_S2_2"/>
    <property type="match status" value="1"/>
</dbReference>
<sequence length="233" mass="26609">MTTSVVTLSELLAARVHLGHRFNKWNPKMVSFIYAERNKVHIIDLVQTAFLLGEACDYVKLLAKKGKKFLFVGTRQELNTILAEEAERCNSFYINQRWLGGLLTNWVTIKSRVQALEKKESEGFFNSLPKKESARLKKELDKLRRYFNGIRKMNTLPDVVIIIDQRKDLTAVQECNKLNIPTICIVDTNCNPDIVDLPIPANDDAICSVKLILGKLVDFIKEGQIERELSKTS</sequence>
<gene>
    <name type="primary">rps2</name>
</gene>
<accession>P35014</accession>
<proteinExistence type="inferred from homology"/>
<geneLocation type="chloroplast"/>
<evidence type="ECO:0000305" key="1"/>